<reference key="1">
    <citation type="journal article" date="2014" name="Genome Announc.">
        <title>Complete Genome Sequence of the Extreme Thermophile Dictyoglomus thermophilum H-6-12.</title>
        <authorList>
            <person name="Coil D.A."/>
            <person name="Badger J.H."/>
            <person name="Forberger H.C."/>
            <person name="Riggs F."/>
            <person name="Madupu R."/>
            <person name="Fedorova N."/>
            <person name="Ward N."/>
            <person name="Robb F.T."/>
            <person name="Eisen J.A."/>
        </authorList>
    </citation>
    <scope>NUCLEOTIDE SEQUENCE [LARGE SCALE GENOMIC DNA]</scope>
    <source>
        <strain>ATCC 35947 / DSM 3960 / H-6-12</strain>
    </source>
</reference>
<feature type="chain" id="PRO_1000184358" description="ATP synthase subunit c">
    <location>
        <begin position="1"/>
        <end position="84"/>
    </location>
</feature>
<feature type="transmembrane region" description="Helical" evidence="1">
    <location>
        <begin position="1"/>
        <end position="21"/>
    </location>
</feature>
<feature type="transmembrane region" description="Helical" evidence="1">
    <location>
        <begin position="53"/>
        <end position="73"/>
    </location>
</feature>
<feature type="site" description="Reversibly protonated during proton transport" evidence="1">
    <location>
        <position position="61"/>
    </location>
</feature>
<accession>B5YBQ2</accession>
<dbReference type="EMBL" id="CP001146">
    <property type="protein sequence ID" value="ACI19079.1"/>
    <property type="molecule type" value="Genomic_DNA"/>
</dbReference>
<dbReference type="RefSeq" id="WP_012547711.1">
    <property type="nucleotide sequence ID" value="NC_011297.1"/>
</dbReference>
<dbReference type="SMR" id="B5YBQ2"/>
<dbReference type="STRING" id="309799.DICTH_1862"/>
<dbReference type="PaxDb" id="309799-DICTH_1862"/>
<dbReference type="KEGG" id="dth:DICTH_1862"/>
<dbReference type="eggNOG" id="COG0636">
    <property type="taxonomic scope" value="Bacteria"/>
</dbReference>
<dbReference type="HOGENOM" id="CLU_148047_2_0_0"/>
<dbReference type="OrthoDB" id="9808662at2"/>
<dbReference type="Proteomes" id="UP000001733">
    <property type="component" value="Chromosome"/>
</dbReference>
<dbReference type="GO" id="GO:0005886">
    <property type="term" value="C:plasma membrane"/>
    <property type="evidence" value="ECO:0007669"/>
    <property type="project" value="UniProtKB-SubCell"/>
</dbReference>
<dbReference type="GO" id="GO:0045259">
    <property type="term" value="C:proton-transporting ATP synthase complex"/>
    <property type="evidence" value="ECO:0007669"/>
    <property type="project" value="UniProtKB-KW"/>
</dbReference>
<dbReference type="GO" id="GO:0033177">
    <property type="term" value="C:proton-transporting two-sector ATPase complex, proton-transporting domain"/>
    <property type="evidence" value="ECO:0007669"/>
    <property type="project" value="InterPro"/>
</dbReference>
<dbReference type="GO" id="GO:0008289">
    <property type="term" value="F:lipid binding"/>
    <property type="evidence" value="ECO:0007669"/>
    <property type="project" value="UniProtKB-KW"/>
</dbReference>
<dbReference type="GO" id="GO:0046933">
    <property type="term" value="F:proton-transporting ATP synthase activity, rotational mechanism"/>
    <property type="evidence" value="ECO:0007669"/>
    <property type="project" value="UniProtKB-UniRule"/>
</dbReference>
<dbReference type="CDD" id="cd18121">
    <property type="entry name" value="ATP-synt_Fo_c"/>
    <property type="match status" value="1"/>
</dbReference>
<dbReference type="Gene3D" id="1.20.120.610">
    <property type="entry name" value="lithium bound rotor ring of v- atpase"/>
    <property type="match status" value="1"/>
</dbReference>
<dbReference type="HAMAP" id="MF_01396">
    <property type="entry name" value="ATP_synth_c_bact"/>
    <property type="match status" value="1"/>
</dbReference>
<dbReference type="InterPro" id="IPR000454">
    <property type="entry name" value="ATP_synth_F0_csu"/>
</dbReference>
<dbReference type="InterPro" id="IPR020537">
    <property type="entry name" value="ATP_synth_F0_csu_DDCD_BS"/>
</dbReference>
<dbReference type="InterPro" id="IPR002379">
    <property type="entry name" value="ATPase_proteolipid_c-like_dom"/>
</dbReference>
<dbReference type="InterPro" id="IPR035921">
    <property type="entry name" value="F/V-ATP_Csub_sf"/>
</dbReference>
<dbReference type="Pfam" id="PF00137">
    <property type="entry name" value="ATP-synt_C"/>
    <property type="match status" value="1"/>
</dbReference>
<dbReference type="SUPFAM" id="SSF81333">
    <property type="entry name" value="F1F0 ATP synthase subunit C"/>
    <property type="match status" value="1"/>
</dbReference>
<dbReference type="PROSITE" id="PS00605">
    <property type="entry name" value="ATPASE_C"/>
    <property type="match status" value="1"/>
</dbReference>
<protein>
    <recommendedName>
        <fullName evidence="1">ATP synthase subunit c</fullName>
    </recommendedName>
    <alternativeName>
        <fullName evidence="1">ATP synthase F(0) sector subunit c</fullName>
    </alternativeName>
    <alternativeName>
        <fullName evidence="1">F-type ATPase subunit c</fullName>
        <shortName evidence="1">F-ATPase subunit c</shortName>
    </alternativeName>
    <alternativeName>
        <fullName evidence="1">Lipid-binding protein</fullName>
    </alternativeName>
</protein>
<keyword id="KW-0066">ATP synthesis</keyword>
<keyword id="KW-0997">Cell inner membrane</keyword>
<keyword id="KW-1003">Cell membrane</keyword>
<keyword id="KW-0138">CF(0)</keyword>
<keyword id="KW-0375">Hydrogen ion transport</keyword>
<keyword id="KW-0406">Ion transport</keyword>
<keyword id="KW-0446">Lipid-binding</keyword>
<keyword id="KW-0472">Membrane</keyword>
<keyword id="KW-0812">Transmembrane</keyword>
<keyword id="KW-1133">Transmembrane helix</keyword>
<keyword id="KW-0813">Transport</keyword>
<gene>
    <name evidence="1" type="primary">atpE</name>
    <name type="ordered locus">DICTH_1862</name>
</gene>
<proteinExistence type="inferred from homology"/>
<organism>
    <name type="scientific">Dictyoglomus thermophilum (strain ATCC 35947 / DSM 3960 / H-6-12)</name>
    <dbReference type="NCBI Taxonomy" id="309799"/>
    <lineage>
        <taxon>Bacteria</taxon>
        <taxon>Pseudomonadati</taxon>
        <taxon>Dictyoglomota</taxon>
        <taxon>Dictyoglomia</taxon>
        <taxon>Dictyoglomales</taxon>
        <taxon>Dictyoglomaceae</taxon>
        <taxon>Dictyoglomus</taxon>
    </lineage>
</organism>
<sequence>MLAWVIIVSIITAGLSVALVGMNATKAQGNAAASALESVARQPEAGDQINRMLLFALAFIETIMIFTLTVALILLFANPLLGKL</sequence>
<comment type="function">
    <text evidence="1">F(1)F(0) ATP synthase produces ATP from ADP in the presence of a proton or sodium gradient. F-type ATPases consist of two structural domains, F(1) containing the extramembraneous catalytic core and F(0) containing the membrane proton channel, linked together by a central stalk and a peripheral stalk. During catalysis, ATP synthesis in the catalytic domain of F(1) is coupled via a rotary mechanism of the central stalk subunits to proton translocation.</text>
</comment>
<comment type="function">
    <text evidence="1">Key component of the F(0) channel; it plays a direct role in translocation across the membrane. A homomeric c-ring of between 10-14 subunits forms the central stalk rotor element with the F(1) delta and epsilon subunits.</text>
</comment>
<comment type="subunit">
    <text evidence="1">F-type ATPases have 2 components, F(1) - the catalytic core - and F(0) - the membrane proton channel. F(1) has five subunits: alpha(3), beta(3), gamma(1), delta(1), epsilon(1). F(0) has three main subunits: a(1), b(2) and c(10-14). The alpha and beta chains form an alternating ring which encloses part of the gamma chain. F(1) is attached to F(0) by a central stalk formed by the gamma and epsilon chains, while a peripheral stalk is formed by the delta and b chains.</text>
</comment>
<comment type="subcellular location">
    <subcellularLocation>
        <location evidence="1">Cell inner membrane</location>
        <topology evidence="1">Multi-pass membrane protein</topology>
    </subcellularLocation>
</comment>
<comment type="similarity">
    <text evidence="1">Belongs to the ATPase C chain family.</text>
</comment>
<name>ATPL_DICT6</name>
<evidence type="ECO:0000255" key="1">
    <source>
        <dbReference type="HAMAP-Rule" id="MF_01396"/>
    </source>
</evidence>